<evidence type="ECO:0000255" key="1">
    <source>
        <dbReference type="HAMAP-Rule" id="MF_01844"/>
    </source>
</evidence>
<organism>
    <name type="scientific">Shigella sonnei (strain Ss046)</name>
    <dbReference type="NCBI Taxonomy" id="300269"/>
    <lineage>
        <taxon>Bacteria</taxon>
        <taxon>Pseudomonadati</taxon>
        <taxon>Pseudomonadota</taxon>
        <taxon>Gammaproteobacteria</taxon>
        <taxon>Enterobacterales</taxon>
        <taxon>Enterobacteriaceae</taxon>
        <taxon>Shigella</taxon>
    </lineage>
</organism>
<proteinExistence type="inferred from homology"/>
<dbReference type="EMBL" id="CP000038">
    <property type="protein sequence ID" value="AAZ86818.1"/>
    <property type="molecule type" value="Genomic_DNA"/>
</dbReference>
<dbReference type="RefSeq" id="WP_000681368.1">
    <property type="nucleotide sequence ID" value="NC_007384.1"/>
</dbReference>
<dbReference type="SMR" id="Q3Z5Z4"/>
<dbReference type="GeneID" id="93777422"/>
<dbReference type="KEGG" id="ssn:SSON_0021"/>
<dbReference type="HOGENOM" id="CLU_015803_1_0_6"/>
<dbReference type="Proteomes" id="UP000002529">
    <property type="component" value="Chromosome"/>
</dbReference>
<dbReference type="GO" id="GO:0005886">
    <property type="term" value="C:plasma membrane"/>
    <property type="evidence" value="ECO:0007669"/>
    <property type="project" value="UniProtKB-SubCell"/>
</dbReference>
<dbReference type="GO" id="GO:0015385">
    <property type="term" value="F:sodium:proton antiporter activity"/>
    <property type="evidence" value="ECO:0007669"/>
    <property type="project" value="TreeGrafter"/>
</dbReference>
<dbReference type="GO" id="GO:0006885">
    <property type="term" value="P:regulation of pH"/>
    <property type="evidence" value="ECO:0007669"/>
    <property type="project" value="InterPro"/>
</dbReference>
<dbReference type="FunFam" id="1.20.1530.10:FF:000001">
    <property type="entry name" value="Na(+)/H(+) antiporter NhaA"/>
    <property type="match status" value="1"/>
</dbReference>
<dbReference type="Gene3D" id="1.20.1530.10">
    <property type="entry name" value="Na+/H+ antiporter like domain"/>
    <property type="match status" value="1"/>
</dbReference>
<dbReference type="HAMAP" id="MF_01844">
    <property type="entry name" value="NhaA"/>
    <property type="match status" value="1"/>
</dbReference>
<dbReference type="InterPro" id="IPR023171">
    <property type="entry name" value="Na/H_antiporter_dom_sf"/>
</dbReference>
<dbReference type="InterPro" id="IPR004670">
    <property type="entry name" value="NhaA"/>
</dbReference>
<dbReference type="NCBIfam" id="TIGR00773">
    <property type="entry name" value="NhaA"/>
    <property type="match status" value="1"/>
</dbReference>
<dbReference type="NCBIfam" id="NF007111">
    <property type="entry name" value="PRK09560.1"/>
    <property type="match status" value="1"/>
</dbReference>
<dbReference type="NCBIfam" id="NF007112">
    <property type="entry name" value="PRK09561.1"/>
    <property type="match status" value="1"/>
</dbReference>
<dbReference type="PANTHER" id="PTHR30341:SF0">
    <property type="entry name" value="NA(+)_H(+) ANTIPORTER NHAA"/>
    <property type="match status" value="1"/>
</dbReference>
<dbReference type="PANTHER" id="PTHR30341">
    <property type="entry name" value="SODIUM ION/PROTON ANTIPORTER NHAA-RELATED"/>
    <property type="match status" value="1"/>
</dbReference>
<dbReference type="Pfam" id="PF06965">
    <property type="entry name" value="Na_H_antiport_1"/>
    <property type="match status" value="1"/>
</dbReference>
<sequence length="388" mass="41374">MKHLHRFFSSDASGGIILIIAAILAMMMANSGATSGWYHDFLETPVQLRVGSLEINKNMLLWINDALMAVFFLLVGLEVKRELMQGSLASLRQAAFPVIAAIGGMIVPALLYLAFNYADPITREGWAIPAATDIAFALGVLALLGSRVPLALKIFLMALAIIDDLGAIIIIALFYTNDLSMASLGVAAVAIAVLAVLNLCGVRRTGVYILVGVVLWTAVLKSGVHATLAGVIVGFFIPLKEKHGRSPAKRLEHVLHPWVAYLILPLFAFANAGVSLQGVTLDGLTSILPLGIIAGLLIGKPLGISLFCWLALRLKLAHLPEGTTYQQIMAVGILCGIGFTMSIFIASLAFGSVDPELINWAKLGILVGSISSAVIGYSWLRVRLRPSV</sequence>
<feature type="chain" id="PRO_0000334439" description="Na(+)/H(+) antiporter NhaA">
    <location>
        <begin position="1"/>
        <end position="388"/>
    </location>
</feature>
<feature type="topological domain" description="Cytoplasmic" evidence="1">
    <location>
        <begin position="1"/>
        <end position="11"/>
    </location>
</feature>
<feature type="transmembrane region" description="Helical; Name=1" evidence="1">
    <location>
        <begin position="12"/>
        <end position="31"/>
    </location>
</feature>
<feature type="topological domain" description="Periplasmic" evidence="1">
    <location>
        <begin position="32"/>
        <end position="58"/>
    </location>
</feature>
<feature type="transmembrane region" description="Helical; Name=2" evidence="1">
    <location>
        <begin position="59"/>
        <end position="80"/>
    </location>
</feature>
<feature type="topological domain" description="Cytoplasmic" evidence="1">
    <location>
        <begin position="81"/>
        <end position="96"/>
    </location>
</feature>
<feature type="transmembrane region" description="Helical; Name=3" evidence="1">
    <location>
        <begin position="97"/>
        <end position="116"/>
    </location>
</feature>
<feature type="topological domain" description="Periplasmic" evidence="1">
    <location>
        <begin position="117"/>
        <end position="122"/>
    </location>
</feature>
<feature type="transmembrane region" description="Helical; Name=4" evidence="1">
    <location>
        <begin position="123"/>
        <end position="130"/>
    </location>
</feature>
<feature type="topological domain" description="Cytoplasmic" evidence="1">
    <location>
        <begin position="131"/>
        <end position="154"/>
    </location>
</feature>
<feature type="transmembrane region" description="Helical; Name=5" evidence="1">
    <location>
        <begin position="155"/>
        <end position="176"/>
    </location>
</feature>
<feature type="topological domain" description="Periplasmic" evidence="1">
    <location>
        <begin position="177"/>
        <end position="180"/>
    </location>
</feature>
<feature type="transmembrane region" description="Helical; Name=6" evidence="1">
    <location>
        <begin position="181"/>
        <end position="200"/>
    </location>
</feature>
<feature type="topological domain" description="Cytoplasmic" evidence="1">
    <location>
        <begin position="201"/>
        <end position="204"/>
    </location>
</feature>
<feature type="transmembrane region" description="Helical; Name=7" evidence="1">
    <location>
        <begin position="205"/>
        <end position="222"/>
    </location>
</feature>
<feature type="topological domain" description="Periplasmic" evidence="1">
    <location>
        <position position="223"/>
    </location>
</feature>
<feature type="transmembrane region" description="Helical; Name=8" evidence="1">
    <location>
        <begin position="224"/>
        <end position="236"/>
    </location>
</feature>
<feature type="topological domain" description="Cytoplasmic" evidence="1">
    <location>
        <begin position="237"/>
        <end position="253"/>
    </location>
</feature>
<feature type="transmembrane region" description="Helical; Name=9" evidence="1">
    <location>
        <begin position="254"/>
        <end position="272"/>
    </location>
</feature>
<feature type="topological domain" description="Periplasmic" evidence="1">
    <location>
        <begin position="273"/>
        <end position="286"/>
    </location>
</feature>
<feature type="transmembrane region" description="Helical; Name=10" evidence="1">
    <location>
        <begin position="287"/>
        <end position="310"/>
    </location>
</feature>
<feature type="topological domain" description="Cytoplasmic" evidence="1">
    <location>
        <begin position="311"/>
        <end position="339"/>
    </location>
</feature>
<feature type="transmembrane region" description="Helical; Name=11" evidence="1">
    <location>
        <begin position="340"/>
        <end position="350"/>
    </location>
</feature>
<feature type="topological domain" description="Periplasmic" evidence="1">
    <location>
        <begin position="351"/>
        <end position="357"/>
    </location>
</feature>
<feature type="transmembrane region" description="Helical; Name=12" evidence="1">
    <location>
        <begin position="358"/>
        <end position="380"/>
    </location>
</feature>
<feature type="topological domain" description="Cytoplasmic" evidence="1">
    <location>
        <begin position="381"/>
        <end position="388"/>
    </location>
</feature>
<keyword id="KW-0050">Antiport</keyword>
<keyword id="KW-0997">Cell inner membrane</keyword>
<keyword id="KW-1003">Cell membrane</keyword>
<keyword id="KW-0406">Ion transport</keyword>
<keyword id="KW-0472">Membrane</keyword>
<keyword id="KW-1185">Reference proteome</keyword>
<keyword id="KW-0915">Sodium</keyword>
<keyword id="KW-0739">Sodium transport</keyword>
<keyword id="KW-0812">Transmembrane</keyword>
<keyword id="KW-1133">Transmembrane helix</keyword>
<keyword id="KW-0813">Transport</keyword>
<accession>Q3Z5Z4</accession>
<name>NHAA_SHISS</name>
<protein>
    <recommendedName>
        <fullName evidence="1">Na(+)/H(+) antiporter NhaA</fullName>
    </recommendedName>
    <alternativeName>
        <fullName evidence="1">Sodium/proton antiporter NhaA</fullName>
    </alternativeName>
</protein>
<comment type="function">
    <text evidence="1">Na(+)/H(+) antiporter that extrudes sodium in exchange for external protons.</text>
</comment>
<comment type="catalytic activity">
    <reaction evidence="1">
        <text>Na(+)(in) + 2 H(+)(out) = Na(+)(out) + 2 H(+)(in)</text>
        <dbReference type="Rhea" id="RHEA:29251"/>
        <dbReference type="ChEBI" id="CHEBI:15378"/>
        <dbReference type="ChEBI" id="CHEBI:29101"/>
    </reaction>
    <physiologicalReaction direction="left-to-right" evidence="1">
        <dbReference type="Rhea" id="RHEA:29252"/>
    </physiologicalReaction>
</comment>
<comment type="subcellular location">
    <subcellularLocation>
        <location evidence="1">Cell inner membrane</location>
        <topology evidence="1">Multi-pass membrane protein</topology>
    </subcellularLocation>
</comment>
<comment type="similarity">
    <text evidence="1">Belongs to the NhaA Na(+)/H(+) (TC 2.A.33) antiporter family.</text>
</comment>
<gene>
    <name evidence="1" type="primary">nhaA</name>
    <name type="ordered locus">SSON_0021</name>
</gene>
<reference key="1">
    <citation type="journal article" date="2005" name="Nucleic Acids Res.">
        <title>Genome dynamics and diversity of Shigella species, the etiologic agents of bacillary dysentery.</title>
        <authorList>
            <person name="Yang F."/>
            <person name="Yang J."/>
            <person name="Zhang X."/>
            <person name="Chen L."/>
            <person name="Jiang Y."/>
            <person name="Yan Y."/>
            <person name="Tang X."/>
            <person name="Wang J."/>
            <person name="Xiong Z."/>
            <person name="Dong J."/>
            <person name="Xue Y."/>
            <person name="Zhu Y."/>
            <person name="Xu X."/>
            <person name="Sun L."/>
            <person name="Chen S."/>
            <person name="Nie H."/>
            <person name="Peng J."/>
            <person name="Xu J."/>
            <person name="Wang Y."/>
            <person name="Yuan Z."/>
            <person name="Wen Y."/>
            <person name="Yao Z."/>
            <person name="Shen Y."/>
            <person name="Qiang B."/>
            <person name="Hou Y."/>
            <person name="Yu J."/>
            <person name="Jin Q."/>
        </authorList>
    </citation>
    <scope>NUCLEOTIDE SEQUENCE [LARGE SCALE GENOMIC DNA]</scope>
    <source>
        <strain>Ss046</strain>
    </source>
</reference>